<keyword id="KW-0002">3D-structure</keyword>
<keyword id="KW-0007">Acetylation</keyword>
<keyword id="KW-1185">Reference proteome</keyword>
<accession>O49453</accession>
<organism>
    <name type="scientific">Arabidopsis thaliana</name>
    <name type="common">Mouse-ear cress</name>
    <dbReference type="NCBI Taxonomy" id="3702"/>
    <lineage>
        <taxon>Eukaryota</taxon>
        <taxon>Viridiplantae</taxon>
        <taxon>Streptophyta</taxon>
        <taxon>Embryophyta</taxon>
        <taxon>Tracheophyta</taxon>
        <taxon>Spermatophyta</taxon>
        <taxon>Magnoliopsida</taxon>
        <taxon>eudicotyledons</taxon>
        <taxon>Gunneridae</taxon>
        <taxon>Pentapetalae</taxon>
        <taxon>rosids</taxon>
        <taxon>malvids</taxon>
        <taxon>Brassicales</taxon>
        <taxon>Brassicaceae</taxon>
        <taxon>Camelineae</taxon>
        <taxon>Arabidopsis</taxon>
    </lineage>
</organism>
<sequence>MATTGTAAVATGTSTVKRKPVFVKVEQLKPGTTGHTLTVKVIEANIVVPVTRKTRPASSLSRPSQPSRIVECLIGDETGCILFTARNDQVDLMKPGATVILRNSRIDMFKGTMRLGVDKWGRIEATGAASFTVKEDNNLSLVEYELINVGGDQ</sequence>
<proteinExistence type="evidence at protein level"/>
<dbReference type="EMBL" id="AL021749">
    <property type="protein sequence ID" value="CAA16883.1"/>
    <property type="molecule type" value="Genomic_DNA"/>
</dbReference>
<dbReference type="EMBL" id="AL161572">
    <property type="protein sequence ID" value="CAB79646.1"/>
    <property type="molecule type" value="Genomic_DNA"/>
</dbReference>
<dbReference type="EMBL" id="CP002687">
    <property type="protein sequence ID" value="AEE85487.1"/>
    <property type="molecule type" value="Genomic_DNA"/>
</dbReference>
<dbReference type="EMBL" id="AY050905">
    <property type="protein sequence ID" value="AAK93582.1"/>
    <property type="molecule type" value="mRNA"/>
</dbReference>
<dbReference type="EMBL" id="AY056432">
    <property type="protein sequence ID" value="AAL08288.1"/>
    <property type="molecule type" value="mRNA"/>
</dbReference>
<dbReference type="EMBL" id="AY091407">
    <property type="protein sequence ID" value="AAM14346.1"/>
    <property type="molecule type" value="mRNA"/>
</dbReference>
<dbReference type="EMBL" id="AY088082">
    <property type="protein sequence ID" value="AAM65628.1"/>
    <property type="molecule type" value="mRNA"/>
</dbReference>
<dbReference type="PIR" id="T04614">
    <property type="entry name" value="T04614"/>
</dbReference>
<dbReference type="RefSeq" id="NP_194573.1">
    <property type="nucleotide sequence ID" value="NM_118986.3"/>
</dbReference>
<dbReference type="PDB" id="1WJJ">
    <property type="method" value="NMR"/>
    <property type="chains" value="A=14-145"/>
</dbReference>
<dbReference type="PDBsum" id="1WJJ"/>
<dbReference type="BMRB" id="O49453"/>
<dbReference type="SMR" id="O49453"/>
<dbReference type="BioGRID" id="14248">
    <property type="interactions" value="12"/>
</dbReference>
<dbReference type="FunCoup" id="O49453">
    <property type="interactions" value="643"/>
</dbReference>
<dbReference type="IntAct" id="O49453">
    <property type="interactions" value="2"/>
</dbReference>
<dbReference type="STRING" id="3702.O49453"/>
<dbReference type="iPTMnet" id="O49453"/>
<dbReference type="MetOSite" id="O49453"/>
<dbReference type="PaxDb" id="3702-AT4G28440.1"/>
<dbReference type="ProteomicsDB" id="242887"/>
<dbReference type="EnsemblPlants" id="AT4G28440.1">
    <property type="protein sequence ID" value="AT4G28440.1"/>
    <property type="gene ID" value="AT4G28440"/>
</dbReference>
<dbReference type="GeneID" id="828961"/>
<dbReference type="Gramene" id="AT4G28440.1">
    <property type="protein sequence ID" value="AT4G28440.1"/>
    <property type="gene ID" value="AT4G28440"/>
</dbReference>
<dbReference type="KEGG" id="ath:AT4G28440"/>
<dbReference type="Araport" id="AT4G28440"/>
<dbReference type="TAIR" id="AT4G28440"/>
<dbReference type="eggNOG" id="ENOG502S0IA">
    <property type="taxonomic scope" value="Eukaryota"/>
</dbReference>
<dbReference type="HOGENOM" id="CLU_110881_0_0_1"/>
<dbReference type="InParanoid" id="O49453"/>
<dbReference type="OMA" id="DMMKPGS"/>
<dbReference type="OrthoDB" id="2274046at2759"/>
<dbReference type="PhylomeDB" id="O49453"/>
<dbReference type="CD-CODE" id="4299E36E">
    <property type="entry name" value="Nucleolus"/>
</dbReference>
<dbReference type="EvolutionaryTrace" id="O49453"/>
<dbReference type="PRO" id="PR:O49453"/>
<dbReference type="Proteomes" id="UP000006548">
    <property type="component" value="Chromosome 4"/>
</dbReference>
<dbReference type="ExpressionAtlas" id="O49453">
    <property type="expression patterns" value="baseline and differential"/>
</dbReference>
<dbReference type="GO" id="GO:0005886">
    <property type="term" value="C:plasma membrane"/>
    <property type="evidence" value="ECO:0007005"/>
    <property type="project" value="TAIR"/>
</dbReference>
<dbReference type="GO" id="GO:0003729">
    <property type="term" value="F:mRNA binding"/>
    <property type="evidence" value="ECO:0000314"/>
    <property type="project" value="TAIR"/>
</dbReference>
<dbReference type="CDD" id="cd04491">
    <property type="entry name" value="SoSSB_OBF"/>
    <property type="match status" value="1"/>
</dbReference>
<dbReference type="FunFam" id="2.40.50.140:FF:000240">
    <property type="entry name" value="Uncharacterized protein At4g28440"/>
    <property type="match status" value="1"/>
</dbReference>
<dbReference type="Gene3D" id="2.40.50.140">
    <property type="entry name" value="Nucleic acid-binding proteins"/>
    <property type="match status" value="1"/>
</dbReference>
<dbReference type="InterPro" id="IPR012340">
    <property type="entry name" value="NA-bd_OB-fold"/>
</dbReference>
<dbReference type="InterPro" id="IPR048970">
    <property type="entry name" value="Ssb-like_OB"/>
</dbReference>
<dbReference type="PANTHER" id="PTHR31472:SF13">
    <property type="entry name" value="OB DOMAIN-CONTAINING PROTEIN"/>
    <property type="match status" value="1"/>
</dbReference>
<dbReference type="PANTHER" id="PTHR31472">
    <property type="entry name" value="OS05G0244600 PROTEIN"/>
    <property type="match status" value="1"/>
</dbReference>
<dbReference type="Pfam" id="PF21473">
    <property type="entry name" value="Ssb-like_OB"/>
    <property type="match status" value="1"/>
</dbReference>
<dbReference type="SUPFAM" id="SSF50249">
    <property type="entry name" value="Nucleic acid-binding proteins"/>
    <property type="match status" value="1"/>
</dbReference>
<name>Y4844_ARATH</name>
<gene>
    <name type="ordered locus">At4g28440</name>
    <name type="ORF">F20O9.120</name>
</gene>
<feature type="initiator methionine" description="Removed" evidence="1">
    <location>
        <position position="1"/>
    </location>
</feature>
<feature type="chain" id="PRO_0000220612" description="Uncharacterized protein At4g28440">
    <location>
        <begin position="2"/>
        <end position="153"/>
    </location>
</feature>
<feature type="modified residue" description="N-acetylalanine" evidence="1">
    <location>
        <position position="2"/>
    </location>
</feature>
<feature type="strand" evidence="2">
    <location>
        <begin position="35"/>
        <end position="46"/>
    </location>
</feature>
<feature type="strand" evidence="2">
    <location>
        <begin position="49"/>
        <end position="52"/>
    </location>
</feature>
<feature type="strand" evidence="2">
    <location>
        <begin position="70"/>
        <end position="75"/>
    </location>
</feature>
<feature type="strand" evidence="2">
    <location>
        <begin position="80"/>
        <end position="85"/>
    </location>
</feature>
<feature type="helix" evidence="2">
    <location>
        <begin position="89"/>
        <end position="92"/>
    </location>
</feature>
<feature type="strand" evidence="2">
    <location>
        <begin position="98"/>
        <end position="109"/>
    </location>
</feature>
<feature type="strand" evidence="2">
    <location>
        <begin position="112"/>
        <end position="117"/>
    </location>
</feature>
<feature type="turn" evidence="2">
    <location>
        <begin position="139"/>
        <end position="141"/>
    </location>
</feature>
<evidence type="ECO:0007744" key="1">
    <source>
    </source>
</evidence>
<evidence type="ECO:0007829" key="2">
    <source>
        <dbReference type="PDB" id="1WJJ"/>
    </source>
</evidence>
<protein>
    <recommendedName>
        <fullName>Uncharacterized protein At4g28440</fullName>
    </recommendedName>
</protein>
<reference key="1">
    <citation type="journal article" date="1999" name="Nature">
        <title>Sequence and analysis of chromosome 4 of the plant Arabidopsis thaliana.</title>
        <authorList>
            <person name="Mayer K.F.X."/>
            <person name="Schueller C."/>
            <person name="Wambutt R."/>
            <person name="Murphy G."/>
            <person name="Volckaert G."/>
            <person name="Pohl T."/>
            <person name="Duesterhoeft A."/>
            <person name="Stiekema W."/>
            <person name="Entian K.-D."/>
            <person name="Terryn N."/>
            <person name="Harris B."/>
            <person name="Ansorge W."/>
            <person name="Brandt P."/>
            <person name="Grivell L.A."/>
            <person name="Rieger M."/>
            <person name="Weichselgartner M."/>
            <person name="de Simone V."/>
            <person name="Obermaier B."/>
            <person name="Mache R."/>
            <person name="Mueller M."/>
            <person name="Kreis M."/>
            <person name="Delseny M."/>
            <person name="Puigdomenech P."/>
            <person name="Watson M."/>
            <person name="Schmidtheini T."/>
            <person name="Reichert B."/>
            <person name="Portetelle D."/>
            <person name="Perez-Alonso M."/>
            <person name="Boutry M."/>
            <person name="Bancroft I."/>
            <person name="Vos P."/>
            <person name="Hoheisel J."/>
            <person name="Zimmermann W."/>
            <person name="Wedler H."/>
            <person name="Ridley P."/>
            <person name="Langham S.-A."/>
            <person name="McCullagh B."/>
            <person name="Bilham L."/>
            <person name="Robben J."/>
            <person name="van der Schueren J."/>
            <person name="Grymonprez B."/>
            <person name="Chuang Y.-J."/>
            <person name="Vandenbussche F."/>
            <person name="Braeken M."/>
            <person name="Weltjens I."/>
            <person name="Voet M."/>
            <person name="Bastiaens I."/>
            <person name="Aert R."/>
            <person name="Defoor E."/>
            <person name="Weitzenegger T."/>
            <person name="Bothe G."/>
            <person name="Ramsperger U."/>
            <person name="Hilbert H."/>
            <person name="Braun M."/>
            <person name="Holzer E."/>
            <person name="Brandt A."/>
            <person name="Peters S."/>
            <person name="van Staveren M."/>
            <person name="Dirkse W."/>
            <person name="Mooijman P."/>
            <person name="Klein Lankhorst R."/>
            <person name="Rose M."/>
            <person name="Hauf J."/>
            <person name="Koetter P."/>
            <person name="Berneiser S."/>
            <person name="Hempel S."/>
            <person name="Feldpausch M."/>
            <person name="Lamberth S."/>
            <person name="Van den Daele H."/>
            <person name="De Keyser A."/>
            <person name="Buysshaert C."/>
            <person name="Gielen J."/>
            <person name="Villarroel R."/>
            <person name="De Clercq R."/>
            <person name="van Montagu M."/>
            <person name="Rogers J."/>
            <person name="Cronin A."/>
            <person name="Quail M.A."/>
            <person name="Bray-Allen S."/>
            <person name="Clark L."/>
            <person name="Doggett J."/>
            <person name="Hall S."/>
            <person name="Kay M."/>
            <person name="Lennard N."/>
            <person name="McLay K."/>
            <person name="Mayes R."/>
            <person name="Pettett A."/>
            <person name="Rajandream M.A."/>
            <person name="Lyne M."/>
            <person name="Benes V."/>
            <person name="Rechmann S."/>
            <person name="Borkova D."/>
            <person name="Bloecker H."/>
            <person name="Scharfe M."/>
            <person name="Grimm M."/>
            <person name="Loehnert T.-H."/>
            <person name="Dose S."/>
            <person name="de Haan M."/>
            <person name="Maarse A.C."/>
            <person name="Schaefer M."/>
            <person name="Mueller-Auer S."/>
            <person name="Gabel C."/>
            <person name="Fuchs M."/>
            <person name="Fartmann B."/>
            <person name="Granderath K."/>
            <person name="Dauner D."/>
            <person name="Herzl A."/>
            <person name="Neumann S."/>
            <person name="Argiriou A."/>
            <person name="Vitale D."/>
            <person name="Liguori R."/>
            <person name="Piravandi E."/>
            <person name="Massenet O."/>
            <person name="Quigley F."/>
            <person name="Clabauld G."/>
            <person name="Muendlein A."/>
            <person name="Felber R."/>
            <person name="Schnabl S."/>
            <person name="Hiller R."/>
            <person name="Schmidt W."/>
            <person name="Lecharny A."/>
            <person name="Aubourg S."/>
            <person name="Chefdor F."/>
            <person name="Cooke R."/>
            <person name="Berger C."/>
            <person name="Monfort A."/>
            <person name="Casacuberta E."/>
            <person name="Gibbons T."/>
            <person name="Weber N."/>
            <person name="Vandenbol M."/>
            <person name="Bargues M."/>
            <person name="Terol J."/>
            <person name="Torres A."/>
            <person name="Perez-Perez A."/>
            <person name="Purnelle B."/>
            <person name="Bent E."/>
            <person name="Johnson S."/>
            <person name="Tacon D."/>
            <person name="Jesse T."/>
            <person name="Heijnen L."/>
            <person name="Schwarz S."/>
            <person name="Scholler P."/>
            <person name="Heber S."/>
            <person name="Francs P."/>
            <person name="Bielke C."/>
            <person name="Frishman D."/>
            <person name="Haase D."/>
            <person name="Lemcke K."/>
            <person name="Mewes H.-W."/>
            <person name="Stocker S."/>
            <person name="Zaccaria P."/>
            <person name="Bevan M."/>
            <person name="Wilson R.K."/>
            <person name="de la Bastide M."/>
            <person name="Habermann K."/>
            <person name="Parnell L."/>
            <person name="Dedhia N."/>
            <person name="Gnoj L."/>
            <person name="Schutz K."/>
            <person name="Huang E."/>
            <person name="Spiegel L."/>
            <person name="Sekhon M."/>
            <person name="Murray J."/>
            <person name="Sheet P."/>
            <person name="Cordes M."/>
            <person name="Abu-Threideh J."/>
            <person name="Stoneking T."/>
            <person name="Kalicki J."/>
            <person name="Graves T."/>
            <person name="Harmon G."/>
            <person name="Edwards J."/>
            <person name="Latreille P."/>
            <person name="Courtney L."/>
            <person name="Cloud J."/>
            <person name="Abbott A."/>
            <person name="Scott K."/>
            <person name="Johnson D."/>
            <person name="Minx P."/>
            <person name="Bentley D."/>
            <person name="Fulton B."/>
            <person name="Miller N."/>
            <person name="Greco T."/>
            <person name="Kemp K."/>
            <person name="Kramer J."/>
            <person name="Fulton L."/>
            <person name="Mardis E."/>
            <person name="Dante M."/>
            <person name="Pepin K."/>
            <person name="Hillier L.W."/>
            <person name="Nelson J."/>
            <person name="Spieth J."/>
            <person name="Ryan E."/>
            <person name="Andrews S."/>
            <person name="Geisel C."/>
            <person name="Layman D."/>
            <person name="Du H."/>
            <person name="Ali J."/>
            <person name="Berghoff A."/>
            <person name="Jones K."/>
            <person name="Drone K."/>
            <person name="Cotton M."/>
            <person name="Joshu C."/>
            <person name="Antonoiu B."/>
            <person name="Zidanic M."/>
            <person name="Strong C."/>
            <person name="Sun H."/>
            <person name="Lamar B."/>
            <person name="Yordan C."/>
            <person name="Ma P."/>
            <person name="Zhong J."/>
            <person name="Preston R."/>
            <person name="Vil D."/>
            <person name="Shekher M."/>
            <person name="Matero A."/>
            <person name="Shah R."/>
            <person name="Swaby I.K."/>
            <person name="O'Shaughnessy A."/>
            <person name="Rodriguez M."/>
            <person name="Hoffman J."/>
            <person name="Till S."/>
            <person name="Granat S."/>
            <person name="Shohdy N."/>
            <person name="Hasegawa A."/>
            <person name="Hameed A."/>
            <person name="Lodhi M."/>
            <person name="Johnson A."/>
            <person name="Chen E."/>
            <person name="Marra M.A."/>
            <person name="Martienssen R."/>
            <person name="McCombie W.R."/>
        </authorList>
    </citation>
    <scope>NUCLEOTIDE SEQUENCE [LARGE SCALE GENOMIC DNA]</scope>
    <source>
        <strain>cv. Columbia</strain>
    </source>
</reference>
<reference key="2">
    <citation type="journal article" date="2017" name="Plant J.">
        <title>Araport11: a complete reannotation of the Arabidopsis thaliana reference genome.</title>
        <authorList>
            <person name="Cheng C.Y."/>
            <person name="Krishnakumar V."/>
            <person name="Chan A.P."/>
            <person name="Thibaud-Nissen F."/>
            <person name="Schobel S."/>
            <person name="Town C.D."/>
        </authorList>
    </citation>
    <scope>GENOME REANNOTATION</scope>
    <source>
        <strain>cv. Columbia</strain>
    </source>
</reference>
<reference key="3">
    <citation type="journal article" date="2003" name="Science">
        <title>Empirical analysis of transcriptional activity in the Arabidopsis genome.</title>
        <authorList>
            <person name="Yamada K."/>
            <person name="Lim J."/>
            <person name="Dale J.M."/>
            <person name="Chen H."/>
            <person name="Shinn P."/>
            <person name="Palm C.J."/>
            <person name="Southwick A.M."/>
            <person name="Wu H.C."/>
            <person name="Kim C.J."/>
            <person name="Nguyen M."/>
            <person name="Pham P.K."/>
            <person name="Cheuk R.F."/>
            <person name="Karlin-Newmann G."/>
            <person name="Liu S.X."/>
            <person name="Lam B."/>
            <person name="Sakano H."/>
            <person name="Wu T."/>
            <person name="Yu G."/>
            <person name="Miranda M."/>
            <person name="Quach H.L."/>
            <person name="Tripp M."/>
            <person name="Chang C.H."/>
            <person name="Lee J.M."/>
            <person name="Toriumi M.J."/>
            <person name="Chan M.M."/>
            <person name="Tang C.C."/>
            <person name="Onodera C.S."/>
            <person name="Deng J.M."/>
            <person name="Akiyama K."/>
            <person name="Ansari Y."/>
            <person name="Arakawa T."/>
            <person name="Banh J."/>
            <person name="Banno F."/>
            <person name="Bowser L."/>
            <person name="Brooks S.Y."/>
            <person name="Carninci P."/>
            <person name="Chao Q."/>
            <person name="Choy N."/>
            <person name="Enju A."/>
            <person name="Goldsmith A.D."/>
            <person name="Gurjal M."/>
            <person name="Hansen N.F."/>
            <person name="Hayashizaki Y."/>
            <person name="Johnson-Hopson C."/>
            <person name="Hsuan V.W."/>
            <person name="Iida K."/>
            <person name="Karnes M."/>
            <person name="Khan S."/>
            <person name="Koesema E."/>
            <person name="Ishida J."/>
            <person name="Jiang P.X."/>
            <person name="Jones T."/>
            <person name="Kawai J."/>
            <person name="Kamiya A."/>
            <person name="Meyers C."/>
            <person name="Nakajima M."/>
            <person name="Narusaka M."/>
            <person name="Seki M."/>
            <person name="Sakurai T."/>
            <person name="Satou M."/>
            <person name="Tamse R."/>
            <person name="Vaysberg M."/>
            <person name="Wallender E.K."/>
            <person name="Wong C."/>
            <person name="Yamamura Y."/>
            <person name="Yuan S."/>
            <person name="Shinozaki K."/>
            <person name="Davis R.W."/>
            <person name="Theologis A."/>
            <person name="Ecker J.R."/>
        </authorList>
    </citation>
    <scope>NUCLEOTIDE SEQUENCE [LARGE SCALE MRNA]</scope>
    <source>
        <strain>cv. Columbia</strain>
    </source>
</reference>
<reference key="4">
    <citation type="submission" date="2002-03" db="EMBL/GenBank/DDBJ databases">
        <title>Full-length cDNA from Arabidopsis thaliana.</title>
        <authorList>
            <person name="Brover V.V."/>
            <person name="Troukhan M.E."/>
            <person name="Alexandrov N.A."/>
            <person name="Lu Y.-P."/>
            <person name="Flavell R.B."/>
            <person name="Feldmann K.A."/>
        </authorList>
    </citation>
    <scope>NUCLEOTIDE SEQUENCE [LARGE SCALE MRNA]</scope>
</reference>
<reference key="5">
    <citation type="journal article" date="2012" name="Mol. Cell. Proteomics">
        <title>Comparative large-scale characterisation of plant vs. mammal proteins reveals similar and idiosyncratic N-alpha acetylation features.</title>
        <authorList>
            <person name="Bienvenut W.V."/>
            <person name="Sumpton D."/>
            <person name="Martinez A."/>
            <person name="Lilla S."/>
            <person name="Espagne C."/>
            <person name="Meinnel T."/>
            <person name="Giglione C."/>
        </authorList>
    </citation>
    <scope>ACETYLATION [LARGE SCALE ANALYSIS] AT ALA-2</scope>
    <scope>CLEAVAGE OF INITIATOR METHIONINE [LARGE SCALE ANALYSIS]</scope>
    <scope>IDENTIFICATION BY MASS SPECTROMETRY [LARGE SCALE ANALYSIS]</scope>
</reference>
<reference key="6">
    <citation type="submission" date="2004-11" db="PDB data bank">
        <title>Solution structure of hypothetical protein F20O9.120 from Arabidopsis thaliana.</title>
        <authorList>
            <consortium name="RIKEN structural genomics initiative (RSGI)"/>
        </authorList>
    </citation>
    <scope>STRUCTURE BY NMR OF 14-145</scope>
</reference>